<organism>
    <name type="scientific">Methanosarcina acetivorans (strain ATCC 35395 / DSM 2834 / JCM 12185 / C2A)</name>
    <dbReference type="NCBI Taxonomy" id="188937"/>
    <lineage>
        <taxon>Archaea</taxon>
        <taxon>Methanobacteriati</taxon>
        <taxon>Methanobacteriota</taxon>
        <taxon>Stenosarchaea group</taxon>
        <taxon>Methanomicrobia</taxon>
        <taxon>Methanosarcinales</taxon>
        <taxon>Methanosarcinaceae</taxon>
        <taxon>Methanosarcina</taxon>
    </lineage>
</organism>
<comment type="function">
    <text evidence="2">Specifically catalyzes the beta-elimination of phosphate from L-phosphoserine and the beta-addition of sulfite to the dehydroalanine intermediate to produce L-cysteate. Does not display threonine synthase activity like the paralog protein ThrC.</text>
</comment>
<comment type="catalytic activity">
    <reaction evidence="2">
        <text>O-phospho-L-serine + sulfite + H(+) = L-cysteate + phosphate</text>
        <dbReference type="Rhea" id="RHEA:26486"/>
        <dbReference type="ChEBI" id="CHEBI:15378"/>
        <dbReference type="ChEBI" id="CHEBI:17359"/>
        <dbReference type="ChEBI" id="CHEBI:43474"/>
        <dbReference type="ChEBI" id="CHEBI:57524"/>
        <dbReference type="ChEBI" id="CHEBI:58090"/>
        <dbReference type="EC" id="2.5.1.76"/>
    </reaction>
</comment>
<comment type="cofactor">
    <cofactor evidence="2">
        <name>pyridoxal 5'-phosphate</name>
        <dbReference type="ChEBI" id="CHEBI:597326"/>
    </cofactor>
</comment>
<comment type="activity regulation">
    <text evidence="2">Is inhibited by AP3 (DL-2-amino-3-phosphonopropionate) and, to a lesser extent, by L-aspartate or AP4 (DL-2-amino-4-phosphonobutyrate). Is also inhibited by EDTA in vitro.</text>
</comment>
<comment type="biophysicochemical properties">
    <kinetics>
        <KM evidence="2">0.43 mM for O-phospho-L-serine</KM>
        <KM evidence="2">51 uM for sulfite</KM>
    </kinetics>
</comment>
<comment type="pathway">
    <text evidence="2">Cofactor biosynthesis; coenzyme M biosynthesis.</text>
</comment>
<comment type="subunit">
    <text evidence="2">Homotrimer.</text>
</comment>
<comment type="similarity">
    <text evidence="3">Belongs to the threonine synthase family. Cysteate synthase subfamily.</text>
</comment>
<comment type="sequence caution" evidence="3">
    <conflict type="erroneous initiation">
        <sequence resource="EMBL-CDS" id="AAM06667"/>
    </conflict>
</comment>
<dbReference type="EC" id="2.5.1.76"/>
<dbReference type="EMBL" id="AE010299">
    <property type="protein sequence ID" value="AAM06667.1"/>
    <property type="status" value="ALT_INIT"/>
    <property type="molecule type" value="Genomic_DNA"/>
</dbReference>
<dbReference type="RefSeq" id="WP_048066469.1">
    <property type="nucleotide sequence ID" value="NC_003552.1"/>
</dbReference>
<dbReference type="SMR" id="Q8TKU7"/>
<dbReference type="STRING" id="188937.MA_3297"/>
<dbReference type="EnsemblBacteria" id="AAM06667">
    <property type="protein sequence ID" value="AAM06667"/>
    <property type="gene ID" value="MA_3297"/>
</dbReference>
<dbReference type="GeneID" id="1475190"/>
<dbReference type="KEGG" id="mac:MA_3297"/>
<dbReference type="HOGENOM" id="CLU_666687_0_0_2"/>
<dbReference type="InParanoid" id="Q8TKU7"/>
<dbReference type="OrthoDB" id="6371at2157"/>
<dbReference type="PhylomeDB" id="Q8TKU7"/>
<dbReference type="BioCyc" id="MetaCyc:MONOMER-15915"/>
<dbReference type="BRENDA" id="2.5.1.76">
    <property type="organism ID" value="7224"/>
</dbReference>
<dbReference type="SABIO-RK" id="Q8TKU7"/>
<dbReference type="UniPathway" id="UPA00355"/>
<dbReference type="Proteomes" id="UP000002487">
    <property type="component" value="Chromosome"/>
</dbReference>
<dbReference type="GO" id="GO:0005524">
    <property type="term" value="F:ATP binding"/>
    <property type="evidence" value="ECO:0000318"/>
    <property type="project" value="GO_Central"/>
</dbReference>
<dbReference type="GO" id="GO:0044686">
    <property type="term" value="F:cysteate synthase activity"/>
    <property type="evidence" value="ECO:0007669"/>
    <property type="project" value="UniProtKB-UniRule"/>
</dbReference>
<dbReference type="GO" id="GO:0003941">
    <property type="term" value="F:L-serine ammonia-lyase activity"/>
    <property type="evidence" value="ECO:0000318"/>
    <property type="project" value="GO_Central"/>
</dbReference>
<dbReference type="GO" id="GO:0000287">
    <property type="term" value="F:magnesium ion binding"/>
    <property type="evidence" value="ECO:0000318"/>
    <property type="project" value="GO_Central"/>
</dbReference>
<dbReference type="GO" id="GO:0030170">
    <property type="term" value="F:pyridoxal phosphate binding"/>
    <property type="evidence" value="ECO:0000318"/>
    <property type="project" value="GO_Central"/>
</dbReference>
<dbReference type="GO" id="GO:0030378">
    <property type="term" value="F:serine racemase activity"/>
    <property type="evidence" value="ECO:0000318"/>
    <property type="project" value="GO_Central"/>
</dbReference>
<dbReference type="GO" id="GO:0018114">
    <property type="term" value="F:threonine racemase activity"/>
    <property type="evidence" value="ECO:0000318"/>
    <property type="project" value="GO_Central"/>
</dbReference>
<dbReference type="GO" id="GO:0019295">
    <property type="term" value="P:coenzyme M biosynthetic process"/>
    <property type="evidence" value="ECO:0007669"/>
    <property type="project" value="UniProtKB-UniRule"/>
</dbReference>
<dbReference type="GO" id="GO:0070179">
    <property type="term" value="P:D-serine biosynthetic process"/>
    <property type="evidence" value="ECO:0000318"/>
    <property type="project" value="GO_Central"/>
</dbReference>
<dbReference type="Gene3D" id="3.40.50.1100">
    <property type="match status" value="2"/>
</dbReference>
<dbReference type="HAMAP" id="MF_02109">
    <property type="entry name" value="Cya_synthase"/>
    <property type="match status" value="1"/>
</dbReference>
<dbReference type="InterPro" id="IPR022401">
    <property type="entry name" value="Cysteate_synthase"/>
</dbReference>
<dbReference type="InterPro" id="IPR001926">
    <property type="entry name" value="TrpB-like_PALP"/>
</dbReference>
<dbReference type="InterPro" id="IPR036052">
    <property type="entry name" value="TrpB-like_PALP_sf"/>
</dbReference>
<dbReference type="NCBIfam" id="TIGR03844">
    <property type="entry name" value="cysteate_syn"/>
    <property type="match status" value="1"/>
</dbReference>
<dbReference type="PANTHER" id="PTHR43050">
    <property type="entry name" value="SERINE / THREONINE RACEMASE FAMILY MEMBER"/>
    <property type="match status" value="1"/>
</dbReference>
<dbReference type="PANTHER" id="PTHR43050:SF1">
    <property type="entry name" value="SERINE RACEMASE"/>
    <property type="match status" value="1"/>
</dbReference>
<dbReference type="Pfam" id="PF00291">
    <property type="entry name" value="PALP"/>
    <property type="match status" value="1"/>
</dbReference>
<dbReference type="SUPFAM" id="SSF53686">
    <property type="entry name" value="Tryptophan synthase beta subunit-like PLP-dependent enzymes"/>
    <property type="match status" value="1"/>
</dbReference>
<gene>
    <name type="ordered locus">MA_3297</name>
</gene>
<accession>Q8TKU7</accession>
<keyword id="KW-0174">Coenzyme M biosynthesis</keyword>
<keyword id="KW-0663">Pyridoxal phosphate</keyword>
<keyword id="KW-1185">Reference proteome</keyword>
<keyword id="KW-0808">Transferase</keyword>
<name>CYAS_METAC</name>
<feature type="chain" id="PRO_0000392650" description="Cysteate synthase">
    <location>
        <begin position="1"/>
        <end position="416"/>
    </location>
</feature>
<feature type="binding site" evidence="1">
    <location>
        <position position="130"/>
    </location>
    <ligand>
        <name>pyridoxal 5'-phosphate</name>
        <dbReference type="ChEBI" id="CHEBI:597326"/>
    </ligand>
</feature>
<feature type="modified residue" description="N6-(pyridoxal phosphate)lysine" evidence="1">
    <location>
        <position position="104"/>
    </location>
</feature>
<evidence type="ECO:0000250" key="1"/>
<evidence type="ECO:0000269" key="2">
    <source>
    </source>
</evidence>
<evidence type="ECO:0000305" key="3"/>
<reference key="1">
    <citation type="journal article" date="2002" name="Genome Res.">
        <title>The genome of Methanosarcina acetivorans reveals extensive metabolic and physiological diversity.</title>
        <authorList>
            <person name="Galagan J.E."/>
            <person name="Nusbaum C."/>
            <person name="Roy A."/>
            <person name="Endrizzi M.G."/>
            <person name="Macdonald P."/>
            <person name="FitzHugh W."/>
            <person name="Calvo S."/>
            <person name="Engels R."/>
            <person name="Smirnov S."/>
            <person name="Atnoor D."/>
            <person name="Brown A."/>
            <person name="Allen N."/>
            <person name="Naylor J."/>
            <person name="Stange-Thomann N."/>
            <person name="DeArellano K."/>
            <person name="Johnson R."/>
            <person name="Linton L."/>
            <person name="McEwan P."/>
            <person name="McKernan K."/>
            <person name="Talamas J."/>
            <person name="Tirrell A."/>
            <person name="Ye W."/>
            <person name="Zimmer A."/>
            <person name="Barber R.D."/>
            <person name="Cann I."/>
            <person name="Graham D.E."/>
            <person name="Grahame D.A."/>
            <person name="Guss A.M."/>
            <person name="Hedderich R."/>
            <person name="Ingram-Smith C."/>
            <person name="Kuettner H.C."/>
            <person name="Krzycki J.A."/>
            <person name="Leigh J.A."/>
            <person name="Li W."/>
            <person name="Liu J."/>
            <person name="Mukhopadhyay B."/>
            <person name="Reeve J.N."/>
            <person name="Smith K."/>
            <person name="Springer T.A."/>
            <person name="Umayam L.A."/>
            <person name="White O."/>
            <person name="White R.H."/>
            <person name="de Macario E.C."/>
            <person name="Ferry J.G."/>
            <person name="Jarrell K.F."/>
            <person name="Jing H."/>
            <person name="Macario A.J.L."/>
            <person name="Paulsen I.T."/>
            <person name="Pritchett M."/>
            <person name="Sowers K.R."/>
            <person name="Swanson R.V."/>
            <person name="Zinder S.H."/>
            <person name="Lander E."/>
            <person name="Metcalf W.W."/>
            <person name="Birren B."/>
        </authorList>
    </citation>
    <scope>NUCLEOTIDE SEQUENCE [LARGE SCALE GENOMIC DNA]</scope>
    <source>
        <strain>ATCC 35395 / DSM 2834 / JCM 12185 / C2A</strain>
    </source>
</reference>
<reference key="2">
    <citation type="journal article" date="2009" name="Biochem. J.">
        <title>Convergent evolution of coenzyme M biosynthesis in the Methanosarcinales: cysteate synthase evolved from an ancestral threonine synthase.</title>
        <authorList>
            <person name="Graham D.E."/>
            <person name="Taylor S.M."/>
            <person name="Wolf R.Z."/>
            <person name="Namboori S.C."/>
        </authorList>
    </citation>
    <scope>FUNCTION AS A CYSTEATE SYNTHASE</scope>
    <scope>CATALYTIC ACTIVITY</scope>
    <scope>COFACTOR</scope>
    <scope>SUBSTRATE SPECIFICITY</scope>
    <scope>KINETIC PARAMETERS</scope>
    <scope>ACTIVITY REGULATION</scope>
    <scope>LACK OF FUNCTION AS A THREONINE SYNTHASE</scope>
    <scope>SUBUNIT</scope>
    <scope>PATHWAY</scope>
</reference>
<proteinExistence type="evidence at protein level"/>
<sequence>MGRFILKCLKCGREYSQEYRLTCENDDSFLRAEYLEKKLELRKQPGIGRFHSWLPVQEELTTEAGPITYKSEALARELGLSNLYIGFSGYWPEKGAFIKTCSFKELEAHPTMQLLKESGGKAIVLASAGNTGRAFAHVSALTGTDVYIVVPDSGIPKLWLPEEPTDSIHLISMTPGNDYTDAINLAGRIAKLPGMVPEGGARNVARREGMGTVMLDAAVTIGKMPDHYFQAVGSGTGGISAWEASLRLREDGRFGSKLPKLQLTQNLPFVPMYNAWQEGRRDIIPEIDMKDAKKRIEETYATVLTNRAPPYSVTGGLYDALVDTDGIMYAVSKEEALDAKALFESLEGIDILPPSAVAAASLLKAVEAGNVGKDDTILLNIAGGGFKRLKEDFTLFQIEPEITVSNPDVPLEELKL</sequence>
<protein>
    <recommendedName>
        <fullName>Cysteate synthase</fullName>
        <shortName>CS</shortName>
        <shortName>Cya synthase</shortName>
        <ecNumber>2.5.1.76</ecNumber>
    </recommendedName>
</protein>